<gene>
    <name evidence="1" type="primary">rplE</name>
    <name type="ordered locus">BAPKO_0518</name>
    <name type="ordered locus">BafPKo_0507</name>
</gene>
<protein>
    <recommendedName>
        <fullName evidence="1">Large ribosomal subunit protein uL5</fullName>
    </recommendedName>
    <alternativeName>
        <fullName evidence="2">50S ribosomal protein L5</fullName>
    </alternativeName>
</protein>
<dbReference type="EMBL" id="CP000395">
    <property type="protein sequence ID" value="ABH01761.1"/>
    <property type="molecule type" value="Genomic_DNA"/>
</dbReference>
<dbReference type="EMBL" id="CP002933">
    <property type="protein sequence ID" value="AEL69715.1"/>
    <property type="molecule type" value="Genomic_DNA"/>
</dbReference>
<dbReference type="RefSeq" id="WP_004789431.1">
    <property type="nucleotide sequence ID" value="NZ_CP160066.1"/>
</dbReference>
<dbReference type="SMR" id="Q0SN17"/>
<dbReference type="STRING" id="29518.BLA32_01810"/>
<dbReference type="GeneID" id="77265337"/>
<dbReference type="KEGG" id="baf:BAPKO_0518"/>
<dbReference type="KEGG" id="bafz:BafPKo_0507"/>
<dbReference type="PATRIC" id="fig|390236.22.peg.487"/>
<dbReference type="eggNOG" id="COG0094">
    <property type="taxonomic scope" value="Bacteria"/>
</dbReference>
<dbReference type="HOGENOM" id="CLU_061015_2_1_12"/>
<dbReference type="OrthoDB" id="9806626at2"/>
<dbReference type="Proteomes" id="UP000005216">
    <property type="component" value="Chromosome"/>
</dbReference>
<dbReference type="GO" id="GO:1990904">
    <property type="term" value="C:ribonucleoprotein complex"/>
    <property type="evidence" value="ECO:0007669"/>
    <property type="project" value="UniProtKB-KW"/>
</dbReference>
<dbReference type="GO" id="GO:0005840">
    <property type="term" value="C:ribosome"/>
    <property type="evidence" value="ECO:0007669"/>
    <property type="project" value="UniProtKB-KW"/>
</dbReference>
<dbReference type="GO" id="GO:0019843">
    <property type="term" value="F:rRNA binding"/>
    <property type="evidence" value="ECO:0007669"/>
    <property type="project" value="UniProtKB-UniRule"/>
</dbReference>
<dbReference type="GO" id="GO:0003735">
    <property type="term" value="F:structural constituent of ribosome"/>
    <property type="evidence" value="ECO:0007669"/>
    <property type="project" value="InterPro"/>
</dbReference>
<dbReference type="GO" id="GO:0000049">
    <property type="term" value="F:tRNA binding"/>
    <property type="evidence" value="ECO:0007669"/>
    <property type="project" value="UniProtKB-UniRule"/>
</dbReference>
<dbReference type="GO" id="GO:0006412">
    <property type="term" value="P:translation"/>
    <property type="evidence" value="ECO:0007669"/>
    <property type="project" value="UniProtKB-UniRule"/>
</dbReference>
<dbReference type="FunFam" id="3.30.1440.10:FF:000001">
    <property type="entry name" value="50S ribosomal protein L5"/>
    <property type="match status" value="1"/>
</dbReference>
<dbReference type="Gene3D" id="3.30.1440.10">
    <property type="match status" value="1"/>
</dbReference>
<dbReference type="HAMAP" id="MF_01333_B">
    <property type="entry name" value="Ribosomal_uL5_B"/>
    <property type="match status" value="1"/>
</dbReference>
<dbReference type="InterPro" id="IPR002132">
    <property type="entry name" value="Ribosomal_uL5"/>
</dbReference>
<dbReference type="InterPro" id="IPR020930">
    <property type="entry name" value="Ribosomal_uL5_bac-type"/>
</dbReference>
<dbReference type="InterPro" id="IPR031309">
    <property type="entry name" value="Ribosomal_uL5_C"/>
</dbReference>
<dbReference type="InterPro" id="IPR020929">
    <property type="entry name" value="Ribosomal_uL5_CS"/>
</dbReference>
<dbReference type="InterPro" id="IPR022803">
    <property type="entry name" value="Ribosomal_uL5_dom_sf"/>
</dbReference>
<dbReference type="InterPro" id="IPR031310">
    <property type="entry name" value="Ribosomal_uL5_N"/>
</dbReference>
<dbReference type="NCBIfam" id="NF000585">
    <property type="entry name" value="PRK00010.1"/>
    <property type="match status" value="1"/>
</dbReference>
<dbReference type="PANTHER" id="PTHR11994">
    <property type="entry name" value="60S RIBOSOMAL PROTEIN L11-RELATED"/>
    <property type="match status" value="1"/>
</dbReference>
<dbReference type="Pfam" id="PF00281">
    <property type="entry name" value="Ribosomal_L5"/>
    <property type="match status" value="1"/>
</dbReference>
<dbReference type="Pfam" id="PF00673">
    <property type="entry name" value="Ribosomal_L5_C"/>
    <property type="match status" value="1"/>
</dbReference>
<dbReference type="PIRSF" id="PIRSF002161">
    <property type="entry name" value="Ribosomal_L5"/>
    <property type="match status" value="1"/>
</dbReference>
<dbReference type="SUPFAM" id="SSF55282">
    <property type="entry name" value="RL5-like"/>
    <property type="match status" value="1"/>
</dbReference>
<dbReference type="PROSITE" id="PS00358">
    <property type="entry name" value="RIBOSOMAL_L5"/>
    <property type="match status" value="1"/>
</dbReference>
<reference key="1">
    <citation type="journal article" date="2006" name="BMC Genomics">
        <title>Comparative genome analysis: selection pressure on the Borrelia vls cassettes is essential for infectivity.</title>
        <authorList>
            <person name="Gloeckner G."/>
            <person name="Schulte-Spechtel U."/>
            <person name="Schilhabel M."/>
            <person name="Felder M."/>
            <person name="Suehnel J."/>
            <person name="Wilske B."/>
            <person name="Platzer M."/>
        </authorList>
    </citation>
    <scope>NUCLEOTIDE SEQUENCE [LARGE SCALE GENOMIC DNA]</scope>
    <source>
        <strain>PKo</strain>
    </source>
</reference>
<reference key="2">
    <citation type="journal article" date="2011" name="J. Bacteriol.">
        <title>Whole-genome sequences of two Borrelia afzelii and two Borrelia garinii Lyme disease agent isolates.</title>
        <authorList>
            <person name="Casjens S.R."/>
            <person name="Mongodin E.F."/>
            <person name="Qiu W.G."/>
            <person name="Dunn J.J."/>
            <person name="Luft B.J."/>
            <person name="Fraser-Liggett C.M."/>
            <person name="Schutzer S.E."/>
        </authorList>
    </citation>
    <scope>NUCLEOTIDE SEQUENCE [LARGE SCALE GENOMIC DNA]</scope>
    <source>
        <strain>PKo</strain>
    </source>
</reference>
<organism>
    <name type="scientific">Borreliella afzelii (strain PKo)</name>
    <name type="common">Borrelia afzelii</name>
    <dbReference type="NCBI Taxonomy" id="390236"/>
    <lineage>
        <taxon>Bacteria</taxon>
        <taxon>Pseudomonadati</taxon>
        <taxon>Spirochaetota</taxon>
        <taxon>Spirochaetia</taxon>
        <taxon>Spirochaetales</taxon>
        <taxon>Borreliaceae</taxon>
        <taxon>Borreliella</taxon>
    </lineage>
</organism>
<proteinExistence type="inferred from homology"/>
<sequence length="182" mass="20404">MNYVPELKKYYKDSVIKELVKEFEYKSIMQVPKLEKIVVSIGVGEAVRNKKLLDSAVLELAQITGQKAVKTKAKKAIAGFKIRQGQEIGAKVTLRGNSMYEFLYKLIHLALPRVKDFRGINGDAFDGNGNYSFGISEQIIFSEIDYDKIERISGLNVTIVTTASNDKESKALLLKFGMPFSN</sequence>
<feature type="chain" id="PRO_1000052696" description="Large ribosomal subunit protein uL5">
    <location>
        <begin position="1"/>
        <end position="182"/>
    </location>
</feature>
<keyword id="KW-0687">Ribonucleoprotein</keyword>
<keyword id="KW-0689">Ribosomal protein</keyword>
<keyword id="KW-0694">RNA-binding</keyword>
<keyword id="KW-0699">rRNA-binding</keyword>
<keyword id="KW-0820">tRNA-binding</keyword>
<comment type="function">
    <text evidence="1">This is one of the proteins that bind and probably mediate the attachment of the 5S RNA into the large ribosomal subunit, where it forms part of the central protuberance. In the 70S ribosome it contacts protein S13 of the 30S subunit (bridge B1b), connecting the 2 subunits; this bridge is implicated in subunit movement. Contacts the P site tRNA; the 5S rRNA and some of its associated proteins might help stabilize positioning of ribosome-bound tRNAs.</text>
</comment>
<comment type="subunit">
    <text evidence="1">Part of the 50S ribosomal subunit; part of the 5S rRNA/L5/L18/L25 subcomplex. Contacts the 5S rRNA and the P site tRNA. Forms a bridge to the 30S subunit in the 70S ribosome.</text>
</comment>
<comment type="similarity">
    <text evidence="1">Belongs to the universal ribosomal protein uL5 family.</text>
</comment>
<evidence type="ECO:0000255" key="1">
    <source>
        <dbReference type="HAMAP-Rule" id="MF_01333"/>
    </source>
</evidence>
<evidence type="ECO:0000305" key="2"/>
<name>RL5_BORAP</name>
<accession>Q0SN17</accession>
<accession>G0ISD4</accession>